<dbReference type="EC" id="5.3.3.4" evidence="1"/>
<dbReference type="EMBL" id="M19460">
    <property type="protein sequence ID" value="AAA25767.1"/>
    <property type="molecule type" value="Genomic_DNA"/>
</dbReference>
<dbReference type="EMBL" id="U12557">
    <property type="protein sequence ID" value="AAA66203.1"/>
    <property type="molecule type" value="Genomic_DNA"/>
</dbReference>
<dbReference type="PIR" id="B28630">
    <property type="entry name" value="ISPSMP"/>
</dbReference>
<dbReference type="PDB" id="1MLI">
    <property type="method" value="X-ray"/>
    <property type="resolution" value="3.30 A"/>
    <property type="chains" value="A/B/C/D/E/F/G/H/I/J=1-96"/>
</dbReference>
<dbReference type="PDBsum" id="1MLI"/>
<dbReference type="SMR" id="P00948"/>
<dbReference type="KEGG" id="ag:AAA66203"/>
<dbReference type="eggNOG" id="COG4829">
    <property type="taxonomic scope" value="Bacteria"/>
</dbReference>
<dbReference type="BioCyc" id="MetaCyc:MONOMER-3424"/>
<dbReference type="UniPathway" id="UPA00157">
    <property type="reaction ID" value="UER00260"/>
</dbReference>
<dbReference type="EvolutionaryTrace" id="P00948"/>
<dbReference type="GO" id="GO:0016159">
    <property type="term" value="F:muconolactone delta-isomerase activity"/>
    <property type="evidence" value="ECO:0007669"/>
    <property type="project" value="UniProtKB-EC"/>
</dbReference>
<dbReference type="GO" id="GO:0042952">
    <property type="term" value="P:beta-ketoadipate pathway"/>
    <property type="evidence" value="ECO:0007669"/>
    <property type="project" value="UniProtKB-UniPathway"/>
</dbReference>
<dbReference type="Gene3D" id="3.30.70.1060">
    <property type="entry name" value="Dimeric alpha+beta barrel"/>
    <property type="match status" value="1"/>
</dbReference>
<dbReference type="InterPro" id="IPR011008">
    <property type="entry name" value="Dimeric_a/b-barrel"/>
</dbReference>
<dbReference type="InterPro" id="IPR026029">
    <property type="entry name" value="MLI_dom"/>
</dbReference>
<dbReference type="InterPro" id="IPR003464">
    <property type="entry name" value="Muconolactone_d_Isoase"/>
</dbReference>
<dbReference type="NCBIfam" id="TIGR03221">
    <property type="entry name" value="muco_delta"/>
    <property type="match status" value="1"/>
</dbReference>
<dbReference type="Pfam" id="PF02426">
    <property type="entry name" value="MIase"/>
    <property type="match status" value="1"/>
</dbReference>
<dbReference type="PIRSF" id="PIRSF001486">
    <property type="entry name" value="CatC"/>
    <property type="match status" value="1"/>
</dbReference>
<dbReference type="SUPFAM" id="SSF54909">
    <property type="entry name" value="Dimeric alpha+beta barrel"/>
    <property type="match status" value="1"/>
</dbReference>
<keyword id="KW-0002">3D-structure</keyword>
<keyword id="KW-0058">Aromatic hydrocarbons catabolism</keyword>
<keyword id="KW-0903">Direct protein sequencing</keyword>
<keyword id="KW-0413">Isomerase</keyword>
<organism>
    <name type="scientific">Pseudomonas putida</name>
    <name type="common">Arthrobacter siderocapsulatus</name>
    <dbReference type="NCBI Taxonomy" id="303"/>
    <lineage>
        <taxon>Bacteria</taxon>
        <taxon>Pseudomonadati</taxon>
        <taxon>Pseudomonadota</taxon>
        <taxon>Gammaproteobacteria</taxon>
        <taxon>Pseudomonadales</taxon>
        <taxon>Pseudomonadaceae</taxon>
        <taxon>Pseudomonas</taxon>
    </lineage>
</organism>
<gene>
    <name type="primary">catC</name>
</gene>
<evidence type="ECO:0000269" key="1">
    <source>
    </source>
</evidence>
<evidence type="ECO:0000305" key="2"/>
<accession>P00948</accession>
<accession>Q51959</accession>
<proteinExistence type="evidence at protein level"/>
<name>CATC_PSEPU</name>
<sequence length="96" mass="11116">MLFHVKMTVKLPVDMDPAKATQLKADEKELAQRLQREGTWRHLWRIAGHYANYSVFDVSSVEACNDTLMQLPLFPYMDIEVDGLCRHPSSIHSDDR</sequence>
<protein>
    <recommendedName>
        <fullName>Muconolactone Delta-isomerase</fullName>
        <shortName>MIase</shortName>
        <ecNumber evidence="1">5.3.3.4</ecNumber>
    </recommendedName>
</protein>
<reference key="1">
    <citation type="journal article" date="1988" name="J. Bacteriol.">
        <title>Transcriptional regulation, nucleotide sequence, and localization of the promoter of the catBC operon in Pseudomonas putida.</title>
        <authorList>
            <person name="Aldrich T.L."/>
            <person name="Chakrabarty A.M."/>
        </authorList>
    </citation>
    <scope>NUCLEOTIDE SEQUENCE [GENOMIC DNA]</scope>
</reference>
<reference key="2">
    <citation type="journal article" date="1995" name="J. Bacteriol.">
        <title>Discontinuities in the evolution of Pseudomonas putida cat genes.</title>
        <authorList>
            <person name="Houghton J.E."/>
            <person name="Brown T.M."/>
            <person name="Appel A.J."/>
            <person name="Hughes E.J."/>
            <person name="Ornston L.N."/>
        </authorList>
    </citation>
    <scope>NUCLEOTIDE SEQUENCE [GENOMIC DNA]</scope>
    <source>
        <strain>PRS2000</strain>
    </source>
</reference>
<reference key="3">
    <citation type="journal article" date="1980" name="J. Biol. Chem.">
        <title>Repetitions in the NH2-terminal amino acid sequence of beta-ketoadipate enol-lactone hydrolase from Pseudomonas putida.</title>
        <authorList>
            <person name="McCorkle G.M."/>
            <person name="Yeh W.-K."/>
            <person name="Fletcher P."/>
            <person name="Ornston L.N."/>
        </authorList>
    </citation>
    <scope>PROTEIN SEQUENCE OF 1-52</scope>
</reference>
<reference key="4">
    <citation type="journal article" date="1977" name="Biochim. Biophys. Acta">
        <title>Purification and partial amino acid sequence of the cyanogen bromide fragments of muconolactone isomerase from Pseudomonas putida.</title>
        <authorList>
            <person name="Meagher R.B."/>
        </authorList>
    </citation>
    <scope>PARTIAL PROTEIN SEQUENCE</scope>
    <source>
        <strain>PRS2113</strain>
    </source>
</reference>
<reference key="5">
    <citation type="journal article" date="1966" name="J. Biol. Chem.">
        <title>The conversion of catechol and protocatechuate to beta-ketoadipate by Pseudomonas putida. 3. Enzymes of the catechol pathway.</title>
        <authorList>
            <person name="Ornston L.N."/>
        </authorList>
    </citation>
    <scope>CATALYTIC ACTIVITY</scope>
</reference>
<reference key="6">
    <citation type="journal article" date="1989" name="J. Mol. Biol.">
        <title>Crystal structure of muconolactone isomerase at 3.3-A resolution.</title>
        <authorList>
            <person name="Katti S.K."/>
            <person name="Katz B.A."/>
            <person name="Wyckoff H.W."/>
        </authorList>
    </citation>
    <scope>X-RAY CRYSTALLOGRAPHY (3.3 ANGSTROMS)</scope>
</reference>
<feature type="chain" id="PRO_0000089334" description="Muconolactone Delta-isomerase">
    <location>
        <begin position="1"/>
        <end position="96"/>
    </location>
</feature>
<feature type="sequence conflict" description="In Ref. 1; AAA25767." evidence="2" ref="1">
    <original>TQ</original>
    <variation>AR</variation>
    <location>
        <begin position="21"/>
        <end position="22"/>
    </location>
</feature>
<feature type="sequence conflict" description="In Ref. 1; AAA25767." evidence="2" ref="1">
    <original>A</original>
    <variation>AV</variation>
    <location>
        <position position="47"/>
    </location>
</feature>
<feature type="sequence conflict" description="In Ref. 2; AAA66203." evidence="2" ref="2">
    <original>S</original>
    <variation>P</variation>
    <location>
        <position position="59"/>
    </location>
</feature>
<feature type="sequence conflict" description="In Ref. 2; AAA66203." evidence="2" ref="2">
    <original>CN</original>
    <variation>LH</variation>
    <location>
        <begin position="64"/>
        <end position="65"/>
    </location>
</feature>
<comment type="catalytic activity">
    <reaction evidence="1">
        <text>(S)-muconolactone = (4,5-dihydro-5-oxofuran-2-yl)-acetate</text>
        <dbReference type="Rhea" id="RHEA:12348"/>
        <dbReference type="ChEBI" id="CHEBI:58425"/>
        <dbReference type="ChEBI" id="CHEBI:58736"/>
        <dbReference type="EC" id="5.3.3.4"/>
    </reaction>
</comment>
<comment type="pathway">
    <text>Aromatic compound metabolism; beta-ketoadipate pathway; 5-oxo-4,5-dihydro-2-furylacetate from catechol: step 3/3.</text>
</comment>
<comment type="subunit">
    <text>Homodecamer.</text>
</comment>
<comment type="similarity">
    <text evidence="2">Belongs to the muconolactone Delta-isomerase family.</text>
</comment>